<evidence type="ECO:0000255" key="1">
    <source>
        <dbReference type="HAMAP-Rule" id="MF_00580"/>
    </source>
</evidence>
<name>CH10_SALPK</name>
<protein>
    <recommendedName>
        <fullName evidence="1">Co-chaperonin GroES</fullName>
    </recommendedName>
    <alternativeName>
        <fullName evidence="1">10 kDa chaperonin</fullName>
    </alternativeName>
    <alternativeName>
        <fullName evidence="1">Chaperonin-10</fullName>
        <shortName evidence="1">Cpn10</shortName>
    </alternativeName>
</protein>
<dbReference type="EMBL" id="FM200053">
    <property type="protein sequence ID" value="CAR62136.1"/>
    <property type="molecule type" value="Genomic_DNA"/>
</dbReference>
<dbReference type="RefSeq" id="WP_000027827.1">
    <property type="nucleotide sequence ID" value="NC_011147.1"/>
</dbReference>
<dbReference type="SMR" id="B5BKF3"/>
<dbReference type="KEGG" id="sek:SSPA3850"/>
<dbReference type="HOGENOM" id="CLU_132825_1_1_6"/>
<dbReference type="Proteomes" id="UP000001869">
    <property type="component" value="Chromosome"/>
</dbReference>
<dbReference type="GO" id="GO:0005737">
    <property type="term" value="C:cytoplasm"/>
    <property type="evidence" value="ECO:0007669"/>
    <property type="project" value="UniProtKB-SubCell"/>
</dbReference>
<dbReference type="GO" id="GO:0005524">
    <property type="term" value="F:ATP binding"/>
    <property type="evidence" value="ECO:0007669"/>
    <property type="project" value="InterPro"/>
</dbReference>
<dbReference type="GO" id="GO:0046872">
    <property type="term" value="F:metal ion binding"/>
    <property type="evidence" value="ECO:0007669"/>
    <property type="project" value="TreeGrafter"/>
</dbReference>
<dbReference type="GO" id="GO:0044183">
    <property type="term" value="F:protein folding chaperone"/>
    <property type="evidence" value="ECO:0007669"/>
    <property type="project" value="InterPro"/>
</dbReference>
<dbReference type="GO" id="GO:0051087">
    <property type="term" value="F:protein-folding chaperone binding"/>
    <property type="evidence" value="ECO:0007669"/>
    <property type="project" value="TreeGrafter"/>
</dbReference>
<dbReference type="GO" id="GO:0051082">
    <property type="term" value="F:unfolded protein binding"/>
    <property type="evidence" value="ECO:0007669"/>
    <property type="project" value="TreeGrafter"/>
</dbReference>
<dbReference type="GO" id="GO:0051085">
    <property type="term" value="P:chaperone cofactor-dependent protein refolding"/>
    <property type="evidence" value="ECO:0007669"/>
    <property type="project" value="TreeGrafter"/>
</dbReference>
<dbReference type="CDD" id="cd00320">
    <property type="entry name" value="cpn10"/>
    <property type="match status" value="1"/>
</dbReference>
<dbReference type="FunFam" id="2.30.33.40:FF:000001">
    <property type="entry name" value="10 kDa chaperonin"/>
    <property type="match status" value="1"/>
</dbReference>
<dbReference type="Gene3D" id="2.30.33.40">
    <property type="entry name" value="GroES chaperonin"/>
    <property type="match status" value="1"/>
</dbReference>
<dbReference type="HAMAP" id="MF_00580">
    <property type="entry name" value="CH10"/>
    <property type="match status" value="1"/>
</dbReference>
<dbReference type="InterPro" id="IPR020818">
    <property type="entry name" value="Chaperonin_GroES"/>
</dbReference>
<dbReference type="InterPro" id="IPR037124">
    <property type="entry name" value="Chaperonin_GroES_sf"/>
</dbReference>
<dbReference type="InterPro" id="IPR018369">
    <property type="entry name" value="Chaprnonin_Cpn10_CS"/>
</dbReference>
<dbReference type="InterPro" id="IPR011032">
    <property type="entry name" value="GroES-like_sf"/>
</dbReference>
<dbReference type="NCBIfam" id="NF001526">
    <property type="entry name" value="PRK00364.1-1"/>
    <property type="match status" value="1"/>
</dbReference>
<dbReference type="NCBIfam" id="NF001527">
    <property type="entry name" value="PRK00364.1-2"/>
    <property type="match status" value="1"/>
</dbReference>
<dbReference type="NCBIfam" id="NF001531">
    <property type="entry name" value="PRK00364.2-2"/>
    <property type="match status" value="1"/>
</dbReference>
<dbReference type="PANTHER" id="PTHR10772">
    <property type="entry name" value="10 KDA HEAT SHOCK PROTEIN"/>
    <property type="match status" value="1"/>
</dbReference>
<dbReference type="PANTHER" id="PTHR10772:SF58">
    <property type="entry name" value="CO-CHAPERONIN GROES"/>
    <property type="match status" value="1"/>
</dbReference>
<dbReference type="Pfam" id="PF00166">
    <property type="entry name" value="Cpn10"/>
    <property type="match status" value="1"/>
</dbReference>
<dbReference type="PRINTS" id="PR00297">
    <property type="entry name" value="CHAPERONIN10"/>
</dbReference>
<dbReference type="SMART" id="SM00883">
    <property type="entry name" value="Cpn10"/>
    <property type="match status" value="1"/>
</dbReference>
<dbReference type="SUPFAM" id="SSF50129">
    <property type="entry name" value="GroES-like"/>
    <property type="match status" value="1"/>
</dbReference>
<dbReference type="PROSITE" id="PS00681">
    <property type="entry name" value="CHAPERONINS_CPN10"/>
    <property type="match status" value="1"/>
</dbReference>
<accession>B5BKF3</accession>
<proteinExistence type="inferred from homology"/>
<keyword id="KW-0143">Chaperone</keyword>
<keyword id="KW-0963">Cytoplasm</keyword>
<gene>
    <name evidence="1" type="primary">groES</name>
    <name evidence="1" type="synonym">groS</name>
    <name type="ordered locus">SSPA3850</name>
</gene>
<reference key="1">
    <citation type="journal article" date="2009" name="BMC Genomics">
        <title>Pseudogene accumulation in the evolutionary histories of Salmonella enterica serovars Paratyphi A and Typhi.</title>
        <authorList>
            <person name="Holt K.E."/>
            <person name="Thomson N.R."/>
            <person name="Wain J."/>
            <person name="Langridge G.C."/>
            <person name="Hasan R."/>
            <person name="Bhutta Z.A."/>
            <person name="Quail M.A."/>
            <person name="Norbertczak H."/>
            <person name="Walker D."/>
            <person name="Simmonds M."/>
            <person name="White B."/>
            <person name="Bason N."/>
            <person name="Mungall K."/>
            <person name="Dougan G."/>
            <person name="Parkhill J."/>
        </authorList>
    </citation>
    <scope>NUCLEOTIDE SEQUENCE [LARGE SCALE GENOMIC DNA]</scope>
    <source>
        <strain>AKU_12601</strain>
    </source>
</reference>
<sequence length="97" mass="10318">MSIRPLHDRVIVKRKEVESKSAGGIVLTGSAAGKSTRGEIIAVGKGRILDNGTVQPLDVKVGDIVIFNDGYGVKSEKIDNEEVLIMSESDILAIVEA</sequence>
<feature type="chain" id="PRO_1000129703" description="Co-chaperonin GroES">
    <location>
        <begin position="1"/>
        <end position="97"/>
    </location>
</feature>
<organism>
    <name type="scientific">Salmonella paratyphi A (strain AKU_12601)</name>
    <dbReference type="NCBI Taxonomy" id="554290"/>
    <lineage>
        <taxon>Bacteria</taxon>
        <taxon>Pseudomonadati</taxon>
        <taxon>Pseudomonadota</taxon>
        <taxon>Gammaproteobacteria</taxon>
        <taxon>Enterobacterales</taxon>
        <taxon>Enterobacteriaceae</taxon>
        <taxon>Salmonella</taxon>
    </lineage>
</organism>
<comment type="function">
    <text evidence="1">Together with the chaperonin GroEL, plays an essential role in assisting protein folding. The GroEL-GroES system forms a nano-cage that allows encapsulation of the non-native substrate proteins and provides a physical environment optimized to promote and accelerate protein folding. GroES binds to the apical surface of the GroEL ring, thereby capping the opening of the GroEL channel.</text>
</comment>
<comment type="subunit">
    <text evidence="1">Heptamer of 7 subunits arranged in a ring. Interacts with the chaperonin GroEL.</text>
</comment>
<comment type="subcellular location">
    <subcellularLocation>
        <location evidence="1">Cytoplasm</location>
    </subcellularLocation>
</comment>
<comment type="similarity">
    <text evidence="1">Belongs to the GroES chaperonin family.</text>
</comment>